<organism>
    <name type="scientific">Geobacillus stearothermophilus</name>
    <name type="common">Bacillus stearothermophilus</name>
    <dbReference type="NCBI Taxonomy" id="1422"/>
    <lineage>
        <taxon>Bacteria</taxon>
        <taxon>Bacillati</taxon>
        <taxon>Bacillota</taxon>
        <taxon>Bacilli</taxon>
        <taxon>Bacillales</taxon>
        <taxon>Anoxybacillaceae</taxon>
        <taxon>Geobacillus</taxon>
    </lineage>
</organism>
<gene>
    <name evidence="1" type="primary">pgi1</name>
    <name type="synonym">pgiA</name>
</gene>
<name>G6PI1_GEOSE</name>
<sequence length="449" mass="50337">MTHIRFDYSKALSFFGEHELTYLRDAVKVAHHSLHEKTGVGNDFLGWLDLPVNYDKEEFARIQKAAAKIQADSDVLLVIGIGGSYLGARAAIEMLHHSFYNALPKEKRNTPQIIFVGNNISSTYMKEVMDLLEGKDFSINVISKSGTTTEPAIAFRIFRKLLEEKYGKEEARKRIYATTDRARGALKTLATAEGYETFIIPDDVGGRYSVLTAVGLLPIAVSGANIEEMMKGAAQAREDFSSSELEENAAYQYAAIRNILYNKGKTIELLINYEPALQYFAEWWKQLFGESEGKDQKGIFPASANFSTDLHSLGQYIQEGRRDLFETVLKVEKPRHDLVIEAEENDLDGLNYLAGKTVDFVNTKAFEGTLLAHTDGGVPNLVITLPELNEYTFGYLVYFFEKACAMSGYLLGVNPFDQPGVEAYKVNMFALLGKPGYEEKKAELEKRLK</sequence>
<comment type="function">
    <text evidence="1">Catalyzes the reversible isomerization of glucose-6-phosphate to fructose-6-phosphate.</text>
</comment>
<comment type="catalytic activity">
    <reaction evidence="1">
        <text>alpha-D-glucose 6-phosphate = beta-D-fructose 6-phosphate</text>
        <dbReference type="Rhea" id="RHEA:11816"/>
        <dbReference type="ChEBI" id="CHEBI:57634"/>
        <dbReference type="ChEBI" id="CHEBI:58225"/>
        <dbReference type="EC" id="5.3.1.9"/>
    </reaction>
</comment>
<comment type="pathway">
    <text evidence="1">Carbohydrate biosynthesis; gluconeogenesis.</text>
</comment>
<comment type="pathway">
    <text evidence="1">Carbohydrate degradation; glycolysis; D-glyceraldehyde 3-phosphate and glycerone phosphate from D-glucose: step 2/4.</text>
</comment>
<comment type="subunit">
    <text>Homodimer.</text>
</comment>
<comment type="subcellular location">
    <subcellularLocation>
        <location evidence="1">Cytoplasm</location>
    </subcellularLocation>
</comment>
<comment type="similarity">
    <text evidence="1 2">Belongs to the GPI family.</text>
</comment>
<accession>P13375</accession>
<feature type="chain" id="PRO_0000180591" description="Glucose-6-phosphate isomerase 1">
    <location>
        <begin position="1"/>
        <end position="449"/>
    </location>
</feature>
<feature type="active site" description="Proton donor" evidence="1">
    <location>
        <position position="290"/>
    </location>
</feature>
<feature type="active site" evidence="1">
    <location>
        <position position="311"/>
    </location>
</feature>
<feature type="active site" evidence="1">
    <location>
        <position position="425"/>
    </location>
</feature>
<feature type="modified residue" description="Phosphothreonine" evidence="1">
    <location>
        <position position="38"/>
    </location>
</feature>
<dbReference type="EC" id="5.3.1.9" evidence="1"/>
<dbReference type="EMBL" id="X16639">
    <property type="protein sequence ID" value="CAA34634.1"/>
    <property type="molecule type" value="Genomic_DNA"/>
</dbReference>
<dbReference type="PIR" id="S15936">
    <property type="entry name" value="NUBSSA"/>
</dbReference>
<dbReference type="SMR" id="P13375"/>
<dbReference type="SABIO-RK" id="P13375"/>
<dbReference type="UniPathway" id="UPA00109">
    <property type="reaction ID" value="UER00181"/>
</dbReference>
<dbReference type="UniPathway" id="UPA00138"/>
<dbReference type="GO" id="GO:0005829">
    <property type="term" value="C:cytosol"/>
    <property type="evidence" value="ECO:0007669"/>
    <property type="project" value="TreeGrafter"/>
</dbReference>
<dbReference type="GO" id="GO:0097367">
    <property type="term" value="F:carbohydrate derivative binding"/>
    <property type="evidence" value="ECO:0007669"/>
    <property type="project" value="InterPro"/>
</dbReference>
<dbReference type="GO" id="GO:0004347">
    <property type="term" value="F:glucose-6-phosphate isomerase activity"/>
    <property type="evidence" value="ECO:0007669"/>
    <property type="project" value="UniProtKB-UniRule"/>
</dbReference>
<dbReference type="GO" id="GO:0048029">
    <property type="term" value="F:monosaccharide binding"/>
    <property type="evidence" value="ECO:0007669"/>
    <property type="project" value="TreeGrafter"/>
</dbReference>
<dbReference type="GO" id="GO:0006094">
    <property type="term" value="P:gluconeogenesis"/>
    <property type="evidence" value="ECO:0007669"/>
    <property type="project" value="UniProtKB-UniRule"/>
</dbReference>
<dbReference type="GO" id="GO:0051156">
    <property type="term" value="P:glucose 6-phosphate metabolic process"/>
    <property type="evidence" value="ECO:0007669"/>
    <property type="project" value="TreeGrafter"/>
</dbReference>
<dbReference type="GO" id="GO:0006096">
    <property type="term" value="P:glycolytic process"/>
    <property type="evidence" value="ECO:0007669"/>
    <property type="project" value="UniProtKB-UniRule"/>
</dbReference>
<dbReference type="CDD" id="cd05015">
    <property type="entry name" value="SIS_PGI_1"/>
    <property type="match status" value="1"/>
</dbReference>
<dbReference type="CDD" id="cd05016">
    <property type="entry name" value="SIS_PGI_2"/>
    <property type="match status" value="1"/>
</dbReference>
<dbReference type="FunFam" id="3.40.50.10490:FF:000015">
    <property type="entry name" value="Glucose-6-phosphate isomerase"/>
    <property type="match status" value="1"/>
</dbReference>
<dbReference type="FunFam" id="3.40.50.10490:FF:000016">
    <property type="entry name" value="Glucose-6-phosphate isomerase"/>
    <property type="match status" value="1"/>
</dbReference>
<dbReference type="FunFam" id="3.40.50.10490:FF:000020">
    <property type="entry name" value="Glucose-6-phosphate isomerase"/>
    <property type="match status" value="1"/>
</dbReference>
<dbReference type="Gene3D" id="3.40.50.10490">
    <property type="entry name" value="Glucose-6-phosphate isomerase like protein, domain 1"/>
    <property type="match status" value="3"/>
</dbReference>
<dbReference type="HAMAP" id="MF_00473">
    <property type="entry name" value="G6P_isomerase"/>
    <property type="match status" value="1"/>
</dbReference>
<dbReference type="InterPro" id="IPR001672">
    <property type="entry name" value="G6P_Isomerase"/>
</dbReference>
<dbReference type="InterPro" id="IPR018189">
    <property type="entry name" value="Phosphoglucose_isomerase_CS"/>
</dbReference>
<dbReference type="InterPro" id="IPR046348">
    <property type="entry name" value="SIS_dom_sf"/>
</dbReference>
<dbReference type="InterPro" id="IPR035476">
    <property type="entry name" value="SIS_PGI_1"/>
</dbReference>
<dbReference type="InterPro" id="IPR035482">
    <property type="entry name" value="SIS_PGI_2"/>
</dbReference>
<dbReference type="NCBIfam" id="NF010697">
    <property type="entry name" value="PRK14097.1"/>
    <property type="match status" value="1"/>
</dbReference>
<dbReference type="PANTHER" id="PTHR11469">
    <property type="entry name" value="GLUCOSE-6-PHOSPHATE ISOMERASE"/>
    <property type="match status" value="1"/>
</dbReference>
<dbReference type="PANTHER" id="PTHR11469:SF1">
    <property type="entry name" value="GLUCOSE-6-PHOSPHATE ISOMERASE"/>
    <property type="match status" value="1"/>
</dbReference>
<dbReference type="Pfam" id="PF00342">
    <property type="entry name" value="PGI"/>
    <property type="match status" value="2"/>
</dbReference>
<dbReference type="PRINTS" id="PR00662">
    <property type="entry name" value="G6PISOMERASE"/>
</dbReference>
<dbReference type="SUPFAM" id="SSF53697">
    <property type="entry name" value="SIS domain"/>
    <property type="match status" value="1"/>
</dbReference>
<dbReference type="PROSITE" id="PS00765">
    <property type="entry name" value="P_GLUCOSE_ISOMERASE_1"/>
    <property type="match status" value="1"/>
</dbReference>
<dbReference type="PROSITE" id="PS00174">
    <property type="entry name" value="P_GLUCOSE_ISOMERASE_2"/>
    <property type="match status" value="1"/>
</dbReference>
<dbReference type="PROSITE" id="PS51463">
    <property type="entry name" value="P_GLUCOSE_ISOMERASE_3"/>
    <property type="match status" value="1"/>
</dbReference>
<keyword id="KW-0963">Cytoplasm</keyword>
<keyword id="KW-0312">Gluconeogenesis</keyword>
<keyword id="KW-0324">Glycolysis</keyword>
<keyword id="KW-0413">Isomerase</keyword>
<keyword id="KW-0597">Phosphoprotein</keyword>
<protein>
    <recommendedName>
        <fullName evidence="1">Glucose-6-phosphate isomerase 1</fullName>
        <shortName evidence="1">GPI 1</shortName>
        <ecNumber evidence="1">5.3.1.9</ecNumber>
    </recommendedName>
    <alternativeName>
        <fullName evidence="1">Phosphoglucose isomerase 1</fullName>
        <shortName evidence="1">PGI 1</shortName>
    </alternativeName>
    <alternativeName>
        <fullName evidence="1">Phosphohexose isomerase 1</fullName>
        <shortName evidence="1">PHI 1</shortName>
    </alternativeName>
</protein>
<proteinExistence type="inferred from homology"/>
<evidence type="ECO:0000255" key="1">
    <source>
        <dbReference type="HAMAP-Rule" id="MF_00473"/>
    </source>
</evidence>
<evidence type="ECO:0000305" key="2"/>
<reference key="1">
    <citation type="journal article" date="1989" name="Nucleic Acids Res.">
        <title>Complete nucleotide sequences of two phosphoglucoisomerase isozymes from Bacillus stearothermophilus.</title>
        <authorList>
            <person name="Tao W."/>
            <person name="Wang L."/>
            <person name="Shen R."/>
            <person name="Sheng Z."/>
        </authorList>
    </citation>
    <scope>NUCLEOTIDE SEQUENCE [GENOMIC DNA]</scope>
    <source>
        <strain>T521</strain>
    </source>
</reference>